<evidence type="ECO:0000250" key="1">
    <source>
        <dbReference type="UniProtKB" id="Q4WAW9"/>
    </source>
</evidence>
<evidence type="ECO:0000250" key="2">
    <source>
        <dbReference type="UniProtKB" id="Q5AR53"/>
    </source>
</evidence>
<evidence type="ECO:0000269" key="3">
    <source>
    </source>
</evidence>
<evidence type="ECO:0000269" key="4">
    <source>
    </source>
</evidence>
<evidence type="ECO:0000269" key="5">
    <source>
    </source>
</evidence>
<evidence type="ECO:0000269" key="6">
    <source>
    </source>
</evidence>
<evidence type="ECO:0000303" key="7">
    <source>
    </source>
</evidence>
<evidence type="ECO:0000305" key="8"/>
<evidence type="ECO:0000305" key="9">
    <source>
    </source>
</evidence>
<protein>
    <recommendedName>
        <fullName evidence="7">Iron/alpha-ketoglutarate-dependent dioxygenase ausU</fullName>
        <ecNumber evidence="9">1.14.-.-</ecNumber>
    </recommendedName>
    <alternativeName>
        <fullName evidence="7">Austinoid biosynthesis clusters protein U</fullName>
    </alternativeName>
</protein>
<comment type="function">
    <text evidence="3 4 5 6">Iron/alpha-ketoglutarate-dependent dioxygenase; part of the gene cluster B that mediates the biosynthesis of austinol and dehydroaustinol, two fungal meroterpenoids (PubMed:22329759). The first step of the pathway is the synthesis of 3,5-dimethylorsellinic acid by the polyketide synthase ausA (PubMed:22329759). 3,5-dimethylorsellinic acid is then prenylated by the polyprenyl transferase ausN (PubMed:22329759). Further epoxidation by the FAD-dependent monooxygenase ausM and cyclization by the probable terpene cyclase ausL lead to the formation of protoaustinoid A (PubMed:22329759). Protoaustinoid A is then oxidized to spiro-lactone preaustinoid A3 by the combined action of the FAD-binding monooxygenases ausB and ausC, and the dioxygenase ausE (PubMed:22329759, PubMed:23865690). Acid-catalyzed keto-rearrangement and ring contraction of the tetraketide portion of preaustinoid A3 by ausJ lead to the formation of preaustinoid A4 (PubMed:22329759). The aldo-keto reductase ausK, with the help of ausH, is involved in the next step by transforming preaustinoid A4 into isoaustinone which is in turn hydroxylated by the P450 monooxygenase ausI to form austinolide (PubMed:22329759). Finally, the cytochrome P450 monooxygenase ausG modifies austinolide to austinol (PubMed:22329759). Austinol can be further modified to dehydroaustinol which forms a diffusible complex with diorcinol that initiates conidiation (PubMed:22234162, PubMed:22329759). Due to genetic rearrangements of the clusters and the subsequent loss of some enzymes, the end products of the Emericella nidulans austinoid biosynthesis clusters are austinol and dehydroaustinol, even if additional enzymes, such as the O-acetyltransferase ausQ and the cytochrome P450 monooxygenase ausR are still functional (PubMed:29076725).</text>
</comment>
<comment type="cofactor">
    <cofactor evidence="2">
        <name>Fe cation</name>
        <dbReference type="ChEBI" id="CHEBI:24875"/>
    </cofactor>
</comment>
<comment type="pathway">
    <text evidence="9">Secondary metabolite biosynthesis; terpenoid biosynthesis.</text>
</comment>
<comment type="subunit">
    <text evidence="1">Homodimer.</text>
</comment>
<comment type="miscellaneous">
    <text evidence="9">In A.calidoustus, the austinoid gene cluster lies on a contiguous DNA region, while clusters from E.nidulans and P.brasilianum are split in their respective genomes. Genetic rearrangements provoked variability among the clusters and E.nidulans produces the least number of austionoid derivatives with the end products austinol and dehydroaustinol, while P.brasilianum can produce until acetoxydehydroaustin, and A.calidoustus produces the highest number of identified derivatives.</text>
</comment>
<comment type="similarity">
    <text evidence="8">Belongs to the PhyH family.</text>
</comment>
<reference key="1">
    <citation type="journal article" date="2005" name="Nature">
        <title>Sequencing of Aspergillus nidulans and comparative analysis with A. fumigatus and A. oryzae.</title>
        <authorList>
            <person name="Galagan J.E."/>
            <person name="Calvo S.E."/>
            <person name="Cuomo C."/>
            <person name="Ma L.-J."/>
            <person name="Wortman J.R."/>
            <person name="Batzoglou S."/>
            <person name="Lee S.-I."/>
            <person name="Bastuerkmen M."/>
            <person name="Spevak C.C."/>
            <person name="Clutterbuck J."/>
            <person name="Kapitonov V."/>
            <person name="Jurka J."/>
            <person name="Scazzocchio C."/>
            <person name="Farman M.L."/>
            <person name="Butler J."/>
            <person name="Purcell S."/>
            <person name="Harris S."/>
            <person name="Braus G.H."/>
            <person name="Draht O."/>
            <person name="Busch S."/>
            <person name="D'Enfert C."/>
            <person name="Bouchier C."/>
            <person name="Goldman G.H."/>
            <person name="Bell-Pedersen D."/>
            <person name="Griffiths-Jones S."/>
            <person name="Doonan J.H."/>
            <person name="Yu J."/>
            <person name="Vienken K."/>
            <person name="Pain A."/>
            <person name="Freitag M."/>
            <person name="Selker E.U."/>
            <person name="Archer D.B."/>
            <person name="Penalva M.A."/>
            <person name="Oakley B.R."/>
            <person name="Momany M."/>
            <person name="Tanaka T."/>
            <person name="Kumagai T."/>
            <person name="Asai K."/>
            <person name="Machida M."/>
            <person name="Nierman W.C."/>
            <person name="Denning D.W."/>
            <person name="Caddick M.X."/>
            <person name="Hynes M."/>
            <person name="Paoletti M."/>
            <person name="Fischer R."/>
            <person name="Miller B.L."/>
            <person name="Dyer P.S."/>
            <person name="Sachs M.S."/>
            <person name="Osmani S.A."/>
            <person name="Birren B.W."/>
        </authorList>
    </citation>
    <scope>NUCLEOTIDE SEQUENCE [LARGE SCALE GENOMIC DNA]</scope>
    <source>
        <strain>FGSC A4 / ATCC 38163 / CBS 112.46 / NRRL 194 / M139</strain>
    </source>
</reference>
<reference key="2">
    <citation type="journal article" date="2009" name="Fungal Genet. Biol.">
        <title>The 2008 update of the Aspergillus nidulans genome annotation: a community effort.</title>
        <authorList>
            <person name="Wortman J.R."/>
            <person name="Gilsenan J.M."/>
            <person name="Joardar V."/>
            <person name="Deegan J."/>
            <person name="Clutterbuck J."/>
            <person name="Andersen M.R."/>
            <person name="Archer D."/>
            <person name="Bencina M."/>
            <person name="Braus G."/>
            <person name="Coutinho P."/>
            <person name="von Dohren H."/>
            <person name="Doonan J."/>
            <person name="Driessen A.J."/>
            <person name="Durek P."/>
            <person name="Espeso E."/>
            <person name="Fekete E."/>
            <person name="Flipphi M."/>
            <person name="Estrada C.G."/>
            <person name="Geysens S."/>
            <person name="Goldman G."/>
            <person name="de Groot P.W."/>
            <person name="Hansen K."/>
            <person name="Harris S.D."/>
            <person name="Heinekamp T."/>
            <person name="Helmstaedt K."/>
            <person name="Henrissat B."/>
            <person name="Hofmann G."/>
            <person name="Homan T."/>
            <person name="Horio T."/>
            <person name="Horiuchi H."/>
            <person name="James S."/>
            <person name="Jones M."/>
            <person name="Karaffa L."/>
            <person name="Karanyi Z."/>
            <person name="Kato M."/>
            <person name="Keller N."/>
            <person name="Kelly D.E."/>
            <person name="Kiel J.A."/>
            <person name="Kim J.M."/>
            <person name="van der Klei I.J."/>
            <person name="Klis F.M."/>
            <person name="Kovalchuk A."/>
            <person name="Krasevec N."/>
            <person name="Kubicek C.P."/>
            <person name="Liu B."/>
            <person name="Maccabe A."/>
            <person name="Meyer V."/>
            <person name="Mirabito P."/>
            <person name="Miskei M."/>
            <person name="Mos M."/>
            <person name="Mullins J."/>
            <person name="Nelson D.R."/>
            <person name="Nielsen J."/>
            <person name="Oakley B.R."/>
            <person name="Osmani S.A."/>
            <person name="Pakula T."/>
            <person name="Paszewski A."/>
            <person name="Paulsen I."/>
            <person name="Pilsyk S."/>
            <person name="Pocsi I."/>
            <person name="Punt P.J."/>
            <person name="Ram A.F."/>
            <person name="Ren Q."/>
            <person name="Robellet X."/>
            <person name="Robson G."/>
            <person name="Seiboth B."/>
            <person name="van Solingen P."/>
            <person name="Specht T."/>
            <person name="Sun J."/>
            <person name="Taheri-Talesh N."/>
            <person name="Takeshita N."/>
            <person name="Ussery D."/>
            <person name="vanKuyk P.A."/>
            <person name="Visser H."/>
            <person name="van de Vondervoort P.J."/>
            <person name="de Vries R.P."/>
            <person name="Walton J."/>
            <person name="Xiang X."/>
            <person name="Xiong Y."/>
            <person name="Zeng A.P."/>
            <person name="Brandt B.W."/>
            <person name="Cornell M.J."/>
            <person name="van den Hondel C.A."/>
            <person name="Visser J."/>
            <person name="Oliver S.G."/>
            <person name="Turner G."/>
        </authorList>
    </citation>
    <scope>GENOME REANNOTATION</scope>
    <source>
        <strain>FGSC A4 / ATCC 38163 / CBS 112.46 / NRRL 194 / M139</strain>
    </source>
</reference>
<reference key="3">
    <citation type="journal article" date="2012" name="ACS Chem. Biol.">
        <title>Signaling the induction of sporulation involves the interaction of two secondary metabolites in Aspergillus nidulans.</title>
        <authorList>
            <person name="Rodriguez-Urra A.B."/>
            <person name="Jimenez C."/>
            <person name="Nieto M.I."/>
            <person name="Rodriguez J."/>
            <person name="Hayashi H."/>
            <person name="Ugalde U."/>
        </authorList>
    </citation>
    <scope>FUNCTION</scope>
</reference>
<reference key="4">
    <citation type="journal article" date="2012" name="J. Am. Chem. Soc.">
        <title>Two separate gene clusters encode the biosynthetic pathway for the meroterpenoids austinol and dehydroaustinol in Aspergillus nidulans.</title>
        <authorList>
            <person name="Lo H.C."/>
            <person name="Entwistle R."/>
            <person name="Guo C.J."/>
            <person name="Ahuja M."/>
            <person name="Szewczyk E."/>
            <person name="Hung J.H."/>
            <person name="Chiang Y.M."/>
            <person name="Oakley B.R."/>
            <person name="Wang C.C."/>
        </authorList>
    </citation>
    <scope>FUNCTION</scope>
</reference>
<reference key="5">
    <citation type="journal article" date="2013" name="J. Am. Chem. Soc.">
        <title>Spiro-ring formation is catalyzed by a multifunctional dioxygenase in austinol biosynthesis.</title>
        <authorList>
            <person name="Matsuda Y."/>
            <person name="Awakawa T."/>
            <person name="Wakimoto T."/>
            <person name="Abe I."/>
        </authorList>
    </citation>
    <scope>FUNCTION</scope>
</reference>
<reference key="6">
    <citation type="journal article" date="2017" name="ACS Chem. Biol.">
        <title>Rewiring of the austinoid biosynthetic pathway in filamentous fungi.</title>
        <authorList>
            <person name="Mattern D.J."/>
            <person name="Valiante V."/>
            <person name="Horn F."/>
            <person name="Petzke L."/>
            <person name="Brakhage A.A."/>
        </authorList>
    </citation>
    <scope>FUNCTION</scope>
</reference>
<accession>A0A1U8QGE6</accession>
<accession>C8VQ91</accession>
<accession>Q5AR26</accession>
<proteinExistence type="inferred from homology"/>
<sequence>MTIIPKRSYNVLTTCKAVFRDVGDYWLTTGNLRTTKPQSPAQGFHRDTLLYPVLQYQPATSPSLIVTLLVSMTDATVANGATRVILSSQNGRLLNTIGGPGRASRAKRWGHAGNPSAAAARWWEAYESGTEYKTNATNFLHKMLASCS</sequence>
<dbReference type="EC" id="1.14.-.-" evidence="9"/>
<dbReference type="EMBL" id="BN001308">
    <property type="protein sequence ID" value="CBF87254.1"/>
    <property type="molecule type" value="Genomic_DNA"/>
</dbReference>
<dbReference type="EMBL" id="AACD01000172">
    <property type="protein sequence ID" value="EAA66321.1"/>
    <property type="molecule type" value="Genomic_DNA"/>
</dbReference>
<dbReference type="RefSeq" id="XP_682523.1">
    <property type="nucleotide sequence ID" value="XM_677431.1"/>
</dbReference>
<dbReference type="STRING" id="227321.Q5AR26"/>
<dbReference type="EnsemblFungi" id="CBF87254">
    <property type="protein sequence ID" value="CBF87254"/>
    <property type="gene ID" value="ANIA_09254"/>
</dbReference>
<dbReference type="GeneID" id="2867771"/>
<dbReference type="KEGG" id="ani:ANIA_09254"/>
<dbReference type="VEuPathDB" id="FungiDB:AN9254"/>
<dbReference type="HOGENOM" id="CLU_1758786_0_0_1"/>
<dbReference type="InParanoid" id="A0A1U8QGE6"/>
<dbReference type="OrthoDB" id="445007at2759"/>
<dbReference type="UniPathway" id="UPA00213"/>
<dbReference type="Proteomes" id="UP000000560">
    <property type="component" value="Chromosome VIII"/>
</dbReference>
<dbReference type="GO" id="GO:0051213">
    <property type="term" value="F:dioxygenase activity"/>
    <property type="evidence" value="ECO:0007669"/>
    <property type="project" value="UniProtKB-KW"/>
</dbReference>
<dbReference type="GO" id="GO:0046872">
    <property type="term" value="F:metal ion binding"/>
    <property type="evidence" value="ECO:0007669"/>
    <property type="project" value="UniProtKB-KW"/>
</dbReference>
<dbReference type="GO" id="GO:0016114">
    <property type="term" value="P:terpenoid biosynthetic process"/>
    <property type="evidence" value="ECO:0007669"/>
    <property type="project" value="UniProtKB-UniPathway"/>
</dbReference>
<dbReference type="Gene3D" id="2.60.120.620">
    <property type="entry name" value="q2cbj1_9rhob like domain"/>
    <property type="match status" value="1"/>
</dbReference>
<dbReference type="InterPro" id="IPR008775">
    <property type="entry name" value="Phytyl_CoA_dOase-like"/>
</dbReference>
<dbReference type="Pfam" id="PF05721">
    <property type="entry name" value="PhyH"/>
    <property type="match status" value="1"/>
</dbReference>
<dbReference type="SUPFAM" id="SSF51197">
    <property type="entry name" value="Clavaminate synthase-like"/>
    <property type="match status" value="1"/>
</dbReference>
<feature type="chain" id="PRO_0000453863" description="Iron/alpha-ketoglutarate-dependent dioxygenase ausU">
    <location>
        <begin position="1"/>
        <end position="148"/>
    </location>
</feature>
<feature type="binding site" evidence="2">
    <location>
        <position position="45"/>
    </location>
    <ligand>
        <name>Fe cation</name>
        <dbReference type="ChEBI" id="CHEBI:24875"/>
    </ligand>
</feature>
<feature type="binding site" evidence="2">
    <location>
        <position position="47"/>
    </location>
    <ligand>
        <name>Fe cation</name>
        <dbReference type="ChEBI" id="CHEBI:24875"/>
    </ligand>
</feature>
<organism>
    <name type="scientific">Emericella nidulans (strain FGSC A4 / ATCC 38163 / CBS 112.46 / NRRL 194 / M139)</name>
    <name type="common">Aspergillus nidulans</name>
    <dbReference type="NCBI Taxonomy" id="227321"/>
    <lineage>
        <taxon>Eukaryota</taxon>
        <taxon>Fungi</taxon>
        <taxon>Dikarya</taxon>
        <taxon>Ascomycota</taxon>
        <taxon>Pezizomycotina</taxon>
        <taxon>Eurotiomycetes</taxon>
        <taxon>Eurotiomycetidae</taxon>
        <taxon>Eurotiales</taxon>
        <taxon>Aspergillaceae</taxon>
        <taxon>Aspergillus</taxon>
        <taxon>Aspergillus subgen. Nidulantes</taxon>
    </lineage>
</organism>
<name>AUSU_EMENI</name>
<keyword id="KW-0223">Dioxygenase</keyword>
<keyword id="KW-0408">Iron</keyword>
<keyword id="KW-0479">Metal-binding</keyword>
<keyword id="KW-0560">Oxidoreductase</keyword>
<keyword id="KW-1185">Reference proteome</keyword>
<gene>
    <name evidence="7" type="primary">ausU</name>
    <name type="ORF">AN9254</name>
    <name type="ORF">ANIA_09254</name>
</gene>